<organism>
    <name type="scientific">Salmonella schwarzengrund (strain CVM19633)</name>
    <dbReference type="NCBI Taxonomy" id="439843"/>
    <lineage>
        <taxon>Bacteria</taxon>
        <taxon>Pseudomonadati</taxon>
        <taxon>Pseudomonadota</taxon>
        <taxon>Gammaproteobacteria</taxon>
        <taxon>Enterobacterales</taxon>
        <taxon>Enterobacteriaceae</taxon>
        <taxon>Salmonella</taxon>
    </lineage>
</organism>
<reference key="1">
    <citation type="journal article" date="2011" name="J. Bacteriol.">
        <title>Comparative genomics of 28 Salmonella enterica isolates: evidence for CRISPR-mediated adaptive sublineage evolution.</title>
        <authorList>
            <person name="Fricke W.F."/>
            <person name="Mammel M.K."/>
            <person name="McDermott P.F."/>
            <person name="Tartera C."/>
            <person name="White D.G."/>
            <person name="Leclerc J.E."/>
            <person name="Ravel J."/>
            <person name="Cebula T.A."/>
        </authorList>
    </citation>
    <scope>NUCLEOTIDE SEQUENCE [LARGE SCALE GENOMIC DNA]</scope>
    <source>
        <strain>CVM19633</strain>
    </source>
</reference>
<comment type="function">
    <text evidence="1">ATPase subunit of a proteasome-like degradation complex; this subunit has chaperone activity. The binding of ATP and its subsequent hydrolysis by HslU are essential for unfolding of protein substrates subsequently hydrolyzed by HslV. HslU recognizes the N-terminal part of its protein substrates and unfolds these before they are guided to HslV for hydrolysis.</text>
</comment>
<comment type="subunit">
    <text evidence="1">A double ring-shaped homohexamer of HslV is capped on each side by a ring-shaped HslU homohexamer. The assembly of the HslU/HslV complex is dependent on binding of ATP.</text>
</comment>
<comment type="subcellular location">
    <subcellularLocation>
        <location evidence="1">Cytoplasm</location>
    </subcellularLocation>
</comment>
<comment type="induction">
    <text evidence="1">By heat shock.</text>
</comment>
<comment type="similarity">
    <text evidence="1">Belongs to the ClpX chaperone family. HslU subfamily.</text>
</comment>
<name>HSLU_SALSV</name>
<sequence>MSEMTPREIVSELNKHIIGQDNAKRSVAIALRNRWRRMQLDEELRHEVTPKNILMIGPTGVGKTEIARRLAKLANAPFIKVEATKFTEVGYVGKEVDSIIRDLTDAAVKMVRVQAIEKNRYRAEELAEERILDVLIPPAKNNWGQAEQQQEPSAARQTFRKKLREGQLDDKEIEINLAAAPMGVEIMAPPGMEEMTSQLQSMFQNLGGQKQKPRKLKIKDAMKLLVEEEAAKLVNPEELKQDAIDAVEQHGIVFIDEIDKICKRGETSGPDVSREGVQRDLLPLVEGCTVSTKHGMVKTDHILFIASGAFQVAKPSDLIPELQGRLPIRVELQALTTSDFERILTEPNASVTVQYKALMATEGVNIEFTDSGIKRIAEAAWQVNETTENIGARRLHTVLERLMEEISYNASDLHGQNITIDAEYVSKHLDALVADEDLSRFIL</sequence>
<keyword id="KW-0067">ATP-binding</keyword>
<keyword id="KW-0143">Chaperone</keyword>
<keyword id="KW-0963">Cytoplasm</keyword>
<keyword id="KW-0547">Nucleotide-binding</keyword>
<keyword id="KW-0346">Stress response</keyword>
<gene>
    <name evidence="1" type="primary">hslU</name>
    <name type="ordered locus">SeSA_A4307</name>
</gene>
<feature type="chain" id="PRO_1000100975" description="ATP-dependent protease ATPase subunit HslU">
    <location>
        <begin position="1"/>
        <end position="443"/>
    </location>
</feature>
<feature type="binding site" evidence="1">
    <location>
        <position position="18"/>
    </location>
    <ligand>
        <name>ATP</name>
        <dbReference type="ChEBI" id="CHEBI:30616"/>
    </ligand>
</feature>
<feature type="binding site" evidence="1">
    <location>
        <begin position="60"/>
        <end position="65"/>
    </location>
    <ligand>
        <name>ATP</name>
        <dbReference type="ChEBI" id="CHEBI:30616"/>
    </ligand>
</feature>
<feature type="binding site" evidence="1">
    <location>
        <position position="256"/>
    </location>
    <ligand>
        <name>ATP</name>
        <dbReference type="ChEBI" id="CHEBI:30616"/>
    </ligand>
</feature>
<feature type="binding site" evidence="1">
    <location>
        <position position="321"/>
    </location>
    <ligand>
        <name>ATP</name>
        <dbReference type="ChEBI" id="CHEBI:30616"/>
    </ligand>
</feature>
<feature type="binding site" evidence="1">
    <location>
        <position position="393"/>
    </location>
    <ligand>
        <name>ATP</name>
        <dbReference type="ChEBI" id="CHEBI:30616"/>
    </ligand>
</feature>
<accession>B4TPV2</accession>
<protein>
    <recommendedName>
        <fullName evidence="1">ATP-dependent protease ATPase subunit HslU</fullName>
    </recommendedName>
    <alternativeName>
        <fullName evidence="1">Heat shock protein HslU</fullName>
    </alternativeName>
    <alternativeName>
        <fullName evidence="1">Unfoldase HslU</fullName>
    </alternativeName>
</protein>
<proteinExistence type="inferred from homology"/>
<evidence type="ECO:0000255" key="1">
    <source>
        <dbReference type="HAMAP-Rule" id="MF_00249"/>
    </source>
</evidence>
<dbReference type="EMBL" id="CP001127">
    <property type="protein sequence ID" value="ACF88651.1"/>
    <property type="molecule type" value="Genomic_DNA"/>
</dbReference>
<dbReference type="RefSeq" id="WP_001293360.1">
    <property type="nucleotide sequence ID" value="NC_011094.1"/>
</dbReference>
<dbReference type="SMR" id="B4TPV2"/>
<dbReference type="KEGG" id="sew:SeSA_A4307"/>
<dbReference type="HOGENOM" id="CLU_033123_0_0_6"/>
<dbReference type="Proteomes" id="UP000001865">
    <property type="component" value="Chromosome"/>
</dbReference>
<dbReference type="GO" id="GO:0009376">
    <property type="term" value="C:HslUV protease complex"/>
    <property type="evidence" value="ECO:0007669"/>
    <property type="project" value="UniProtKB-UniRule"/>
</dbReference>
<dbReference type="GO" id="GO:0005524">
    <property type="term" value="F:ATP binding"/>
    <property type="evidence" value="ECO:0007669"/>
    <property type="project" value="UniProtKB-UniRule"/>
</dbReference>
<dbReference type="GO" id="GO:0016887">
    <property type="term" value="F:ATP hydrolysis activity"/>
    <property type="evidence" value="ECO:0007669"/>
    <property type="project" value="InterPro"/>
</dbReference>
<dbReference type="GO" id="GO:0008233">
    <property type="term" value="F:peptidase activity"/>
    <property type="evidence" value="ECO:0007669"/>
    <property type="project" value="InterPro"/>
</dbReference>
<dbReference type="GO" id="GO:0036402">
    <property type="term" value="F:proteasome-activating activity"/>
    <property type="evidence" value="ECO:0007669"/>
    <property type="project" value="UniProtKB-UniRule"/>
</dbReference>
<dbReference type="GO" id="GO:0043335">
    <property type="term" value="P:protein unfolding"/>
    <property type="evidence" value="ECO:0007669"/>
    <property type="project" value="UniProtKB-UniRule"/>
</dbReference>
<dbReference type="GO" id="GO:0051603">
    <property type="term" value="P:proteolysis involved in protein catabolic process"/>
    <property type="evidence" value="ECO:0007669"/>
    <property type="project" value="TreeGrafter"/>
</dbReference>
<dbReference type="CDD" id="cd19498">
    <property type="entry name" value="RecA-like_HslU"/>
    <property type="match status" value="1"/>
</dbReference>
<dbReference type="FunFam" id="1.10.8.10:FF:000012">
    <property type="entry name" value="ATP-dependent protease ATPase subunit HslU"/>
    <property type="match status" value="1"/>
</dbReference>
<dbReference type="FunFam" id="1.10.8.10:FF:000028">
    <property type="entry name" value="ATP-dependent protease ATPase subunit HslU"/>
    <property type="match status" value="1"/>
</dbReference>
<dbReference type="FunFam" id="1.10.8.60:FF:000027">
    <property type="entry name" value="ATP-dependent protease ATPase subunit HslU"/>
    <property type="match status" value="1"/>
</dbReference>
<dbReference type="FunFam" id="3.40.50.300:FF:000213">
    <property type="entry name" value="ATP-dependent protease ATPase subunit HslU"/>
    <property type="match status" value="1"/>
</dbReference>
<dbReference type="FunFam" id="3.40.50.300:FF:000220">
    <property type="entry name" value="ATP-dependent protease ATPase subunit HslU"/>
    <property type="match status" value="1"/>
</dbReference>
<dbReference type="Gene3D" id="1.10.8.60">
    <property type="match status" value="1"/>
</dbReference>
<dbReference type="Gene3D" id="1.10.8.10">
    <property type="entry name" value="DNA helicase RuvA subunit, C-terminal domain"/>
    <property type="match status" value="2"/>
</dbReference>
<dbReference type="Gene3D" id="3.40.50.300">
    <property type="entry name" value="P-loop containing nucleotide triphosphate hydrolases"/>
    <property type="match status" value="1"/>
</dbReference>
<dbReference type="HAMAP" id="MF_00249">
    <property type="entry name" value="HslU"/>
    <property type="match status" value="1"/>
</dbReference>
<dbReference type="InterPro" id="IPR003593">
    <property type="entry name" value="AAA+_ATPase"/>
</dbReference>
<dbReference type="InterPro" id="IPR050052">
    <property type="entry name" value="ATP-dep_Clp_protease_ClpX"/>
</dbReference>
<dbReference type="InterPro" id="IPR003959">
    <property type="entry name" value="ATPase_AAA_core"/>
</dbReference>
<dbReference type="InterPro" id="IPR019489">
    <property type="entry name" value="Clp_ATPase_C"/>
</dbReference>
<dbReference type="InterPro" id="IPR004491">
    <property type="entry name" value="HslU"/>
</dbReference>
<dbReference type="InterPro" id="IPR027417">
    <property type="entry name" value="P-loop_NTPase"/>
</dbReference>
<dbReference type="NCBIfam" id="TIGR00390">
    <property type="entry name" value="hslU"/>
    <property type="match status" value="1"/>
</dbReference>
<dbReference type="NCBIfam" id="NF003544">
    <property type="entry name" value="PRK05201.1"/>
    <property type="match status" value="1"/>
</dbReference>
<dbReference type="PANTHER" id="PTHR48102">
    <property type="entry name" value="ATP-DEPENDENT CLP PROTEASE ATP-BINDING SUBUNIT CLPX-LIKE, MITOCHONDRIAL-RELATED"/>
    <property type="match status" value="1"/>
</dbReference>
<dbReference type="PANTHER" id="PTHR48102:SF3">
    <property type="entry name" value="ATP-DEPENDENT PROTEASE ATPASE SUBUNIT HSLU"/>
    <property type="match status" value="1"/>
</dbReference>
<dbReference type="Pfam" id="PF00004">
    <property type="entry name" value="AAA"/>
    <property type="match status" value="1"/>
</dbReference>
<dbReference type="Pfam" id="PF07724">
    <property type="entry name" value="AAA_2"/>
    <property type="match status" value="1"/>
</dbReference>
<dbReference type="SMART" id="SM00382">
    <property type="entry name" value="AAA"/>
    <property type="match status" value="1"/>
</dbReference>
<dbReference type="SMART" id="SM01086">
    <property type="entry name" value="ClpB_D2-small"/>
    <property type="match status" value="1"/>
</dbReference>
<dbReference type="SUPFAM" id="SSF52540">
    <property type="entry name" value="P-loop containing nucleoside triphosphate hydrolases"/>
    <property type="match status" value="1"/>
</dbReference>